<proteinExistence type="evidence at protein level"/>
<feature type="signal peptide" evidence="2">
    <location>
        <begin position="1"/>
        <end position="19"/>
    </location>
</feature>
<feature type="chain" id="PRO_0000013082" description="Glutathione peroxidase 6">
    <location>
        <begin position="20"/>
        <end position="221"/>
    </location>
</feature>
<feature type="active site" evidence="1">
    <location>
        <position position="73"/>
    </location>
</feature>
<feature type="sequence conflict" description="In Ref. 2; AAH13526." evidence="3" ref="2">
    <original>E</original>
    <variation>G</variation>
    <location>
        <position position="52"/>
    </location>
</feature>
<feature type="sequence conflict" description="In Ref. 2; AAH13526." evidence="3" ref="2">
    <original>V</original>
    <variation>I</variation>
    <location>
        <position position="176"/>
    </location>
</feature>
<feature type="strand" evidence="4">
    <location>
        <begin position="28"/>
        <end position="31"/>
    </location>
</feature>
<feature type="helix" evidence="4">
    <location>
        <begin position="40"/>
        <end position="42"/>
    </location>
</feature>
<feature type="strand" evidence="4">
    <location>
        <begin position="44"/>
        <end position="47"/>
    </location>
</feature>
<feature type="turn" evidence="4">
    <location>
        <begin position="48"/>
        <end position="50"/>
    </location>
</feature>
<feature type="strand" evidence="4">
    <location>
        <begin position="53"/>
        <end position="55"/>
    </location>
</feature>
<feature type="helix" evidence="4">
    <location>
        <begin position="56"/>
        <end position="59"/>
    </location>
</feature>
<feature type="strand" evidence="4">
    <location>
        <begin position="62"/>
        <end position="69"/>
    </location>
</feature>
<feature type="strand" evidence="4">
    <location>
        <begin position="71"/>
        <end position="73"/>
    </location>
</feature>
<feature type="helix" evidence="4">
    <location>
        <begin position="74"/>
        <end position="78"/>
    </location>
</feature>
<feature type="helix" evidence="4">
    <location>
        <begin position="79"/>
        <end position="89"/>
    </location>
</feature>
<feature type="helix" evidence="4">
    <location>
        <begin position="90"/>
        <end position="92"/>
    </location>
</feature>
<feature type="strand" evidence="4">
    <location>
        <begin position="94"/>
        <end position="100"/>
    </location>
</feature>
<feature type="helix" evidence="4">
    <location>
        <begin position="112"/>
        <end position="121"/>
    </location>
</feature>
<feature type="strand" evidence="4">
    <location>
        <begin position="131"/>
        <end position="135"/>
    </location>
</feature>
<feature type="strand" evidence="4">
    <location>
        <begin position="140"/>
        <end position="142"/>
    </location>
</feature>
<feature type="helix" evidence="4">
    <location>
        <begin position="147"/>
        <end position="154"/>
    </location>
</feature>
<feature type="helix" evidence="4">
    <location>
        <begin position="166"/>
        <end position="168"/>
    </location>
</feature>
<feature type="strand" evidence="4">
    <location>
        <begin position="185"/>
        <end position="188"/>
    </location>
</feature>
<feature type="strand" evidence="4">
    <location>
        <begin position="194"/>
        <end position="198"/>
    </location>
</feature>
<feature type="helix" evidence="4">
    <location>
        <begin position="204"/>
        <end position="217"/>
    </location>
</feature>
<reference key="1">
    <citation type="journal article" date="2009" name="PLoS Biol.">
        <title>Lineage-specific biology revealed by a finished genome assembly of the mouse.</title>
        <authorList>
            <person name="Church D.M."/>
            <person name="Goodstadt L."/>
            <person name="Hillier L.W."/>
            <person name="Zody M.C."/>
            <person name="Goldstein S."/>
            <person name="She X."/>
            <person name="Bult C.J."/>
            <person name="Agarwala R."/>
            <person name="Cherry J.L."/>
            <person name="DiCuccio M."/>
            <person name="Hlavina W."/>
            <person name="Kapustin Y."/>
            <person name="Meric P."/>
            <person name="Maglott D."/>
            <person name="Birtle Z."/>
            <person name="Marques A.C."/>
            <person name="Graves T."/>
            <person name="Zhou S."/>
            <person name="Teague B."/>
            <person name="Potamousis K."/>
            <person name="Churas C."/>
            <person name="Place M."/>
            <person name="Herschleb J."/>
            <person name="Runnheim R."/>
            <person name="Forrest D."/>
            <person name="Amos-Landgraf J."/>
            <person name="Schwartz D.C."/>
            <person name="Cheng Z."/>
            <person name="Lindblad-Toh K."/>
            <person name="Eichler E.E."/>
            <person name="Ponting C.P."/>
        </authorList>
    </citation>
    <scope>NUCLEOTIDE SEQUENCE [LARGE SCALE GENOMIC DNA]</scope>
    <source>
        <strain>C57BL/6J</strain>
    </source>
</reference>
<reference key="2">
    <citation type="journal article" date="2004" name="Genome Res.">
        <title>The status, quality, and expansion of the NIH full-length cDNA project: the Mammalian Gene Collection (MGC).</title>
        <authorList>
            <consortium name="The MGC Project Team"/>
        </authorList>
    </citation>
    <scope>NUCLEOTIDE SEQUENCE [LARGE SCALE MRNA]</scope>
    <source>
        <tissue>Kidney</tissue>
    </source>
</reference>
<sequence>MAQKLWGSCLFSLFMAALAQETLNPQKSKVDCNKGVTGTVYEYGANTIDGGEFVNFQQYAGKHILFVNVASFCGLTATYPELNTLQEELKPFNVTVLGFPCNQFGKQEPGKNSEILLGLKYVRPGGGYVPNFQLFEKGDVNGDNEQKVFSFLKNSCPPTSELFGSPEHLFWDPMKVHDIRWNFEKFLVGPDGVPVMRWFHHTPVRIVQSDIMEYLNQTSTQ</sequence>
<gene>
    <name type="primary">Gpx6</name>
</gene>
<keyword id="KW-0002">3D-structure</keyword>
<keyword id="KW-0560">Oxidoreductase</keyword>
<keyword id="KW-0575">Peroxidase</keyword>
<keyword id="KW-1185">Reference proteome</keyword>
<keyword id="KW-0964">Secreted</keyword>
<keyword id="KW-0732">Signal</keyword>
<name>GPX6_MOUSE</name>
<dbReference type="EC" id="1.11.1.9"/>
<dbReference type="EMBL" id="AC124460">
    <property type="status" value="NOT_ANNOTATED_CDS"/>
    <property type="molecule type" value="Genomic_DNA"/>
</dbReference>
<dbReference type="EMBL" id="BC013526">
    <property type="protein sequence ID" value="AAH13526.1"/>
    <property type="molecule type" value="mRNA"/>
</dbReference>
<dbReference type="CCDS" id="CCDS26271.1"/>
<dbReference type="RefSeq" id="NP_663426.2">
    <property type="nucleotide sequence ID" value="NM_145451.3"/>
</dbReference>
<dbReference type="PDB" id="7FC2">
    <property type="method" value="X-ray"/>
    <property type="resolution" value="2.00 A"/>
    <property type="chains" value="A=1-221"/>
</dbReference>
<dbReference type="PDBsum" id="7FC2"/>
<dbReference type="SMR" id="Q91WR8"/>
<dbReference type="BioGRID" id="217537">
    <property type="interactions" value="1"/>
</dbReference>
<dbReference type="FunCoup" id="Q91WR8">
    <property type="interactions" value="70"/>
</dbReference>
<dbReference type="STRING" id="10090.ENSMUSP00000004453"/>
<dbReference type="PeroxiBase" id="3719">
    <property type="entry name" value="MmGPx06"/>
</dbReference>
<dbReference type="PhosphoSitePlus" id="Q91WR8"/>
<dbReference type="PaxDb" id="10090-ENSMUSP00000004453"/>
<dbReference type="ProteomicsDB" id="271053"/>
<dbReference type="Antibodypedia" id="6190">
    <property type="antibodies" value="40 antibodies from 14 providers"/>
</dbReference>
<dbReference type="DNASU" id="75512"/>
<dbReference type="Ensembl" id="ENSMUST00000004453.9">
    <property type="protein sequence ID" value="ENSMUSP00000004453.8"/>
    <property type="gene ID" value="ENSMUSG00000004341.9"/>
</dbReference>
<dbReference type="GeneID" id="75512"/>
<dbReference type="KEGG" id="mmu:75512"/>
<dbReference type="UCSC" id="uc007pqa.1">
    <property type="organism name" value="mouse"/>
</dbReference>
<dbReference type="AGR" id="MGI:1922762"/>
<dbReference type="CTD" id="257202"/>
<dbReference type="MGI" id="MGI:1922762">
    <property type="gene designation" value="Gpx6"/>
</dbReference>
<dbReference type="VEuPathDB" id="HostDB:ENSMUSG00000004341"/>
<dbReference type="eggNOG" id="KOG1651">
    <property type="taxonomic scope" value="Eukaryota"/>
</dbReference>
<dbReference type="GeneTree" id="ENSGT00940000161098"/>
<dbReference type="HOGENOM" id="CLU_029507_2_1_1"/>
<dbReference type="InParanoid" id="Q91WR8"/>
<dbReference type="OMA" id="WFHRASV"/>
<dbReference type="OrthoDB" id="446890at2759"/>
<dbReference type="PhylomeDB" id="Q91WR8"/>
<dbReference type="TreeFam" id="TF105318"/>
<dbReference type="Reactome" id="R-MMU-3299685">
    <property type="pathway name" value="Detoxification of Reactive Oxygen Species"/>
</dbReference>
<dbReference type="BioGRID-ORCS" id="75512">
    <property type="hits" value="3 hits in 81 CRISPR screens"/>
</dbReference>
<dbReference type="ChiTaRS" id="Gpx7">
    <property type="organism name" value="mouse"/>
</dbReference>
<dbReference type="PRO" id="PR:Q91WR8"/>
<dbReference type="Proteomes" id="UP000000589">
    <property type="component" value="Chromosome 13"/>
</dbReference>
<dbReference type="RNAct" id="Q91WR8">
    <property type="molecule type" value="protein"/>
</dbReference>
<dbReference type="Bgee" id="ENSMUSG00000004341">
    <property type="expression patterns" value="Expressed in olfactory epithelium and 103 other cell types or tissues"/>
</dbReference>
<dbReference type="GO" id="GO:0005576">
    <property type="term" value="C:extracellular region"/>
    <property type="evidence" value="ECO:0007669"/>
    <property type="project" value="UniProtKB-SubCell"/>
</dbReference>
<dbReference type="GO" id="GO:0004602">
    <property type="term" value="F:glutathione peroxidase activity"/>
    <property type="evidence" value="ECO:0007669"/>
    <property type="project" value="UniProtKB-EC"/>
</dbReference>
<dbReference type="GO" id="GO:0006979">
    <property type="term" value="P:response to oxidative stress"/>
    <property type="evidence" value="ECO:0007669"/>
    <property type="project" value="InterPro"/>
</dbReference>
<dbReference type="CDD" id="cd00340">
    <property type="entry name" value="GSH_Peroxidase"/>
    <property type="match status" value="1"/>
</dbReference>
<dbReference type="FunFam" id="3.40.30.10:FF:000112">
    <property type="entry name" value="Glutathione peroxidase"/>
    <property type="match status" value="1"/>
</dbReference>
<dbReference type="Gene3D" id="3.40.30.10">
    <property type="entry name" value="Glutaredoxin"/>
    <property type="match status" value="1"/>
</dbReference>
<dbReference type="InterPro" id="IPR000889">
    <property type="entry name" value="Glutathione_peroxidase"/>
</dbReference>
<dbReference type="InterPro" id="IPR029759">
    <property type="entry name" value="GPX_AS"/>
</dbReference>
<dbReference type="InterPro" id="IPR029760">
    <property type="entry name" value="GPX_CS"/>
</dbReference>
<dbReference type="InterPro" id="IPR036249">
    <property type="entry name" value="Thioredoxin-like_sf"/>
</dbReference>
<dbReference type="PANTHER" id="PTHR11592">
    <property type="entry name" value="GLUTATHIONE PEROXIDASE"/>
    <property type="match status" value="1"/>
</dbReference>
<dbReference type="PANTHER" id="PTHR11592:SF15">
    <property type="entry name" value="GLUTATHIONE PEROXIDASE 6"/>
    <property type="match status" value="1"/>
</dbReference>
<dbReference type="Pfam" id="PF00255">
    <property type="entry name" value="GSHPx"/>
    <property type="match status" value="1"/>
</dbReference>
<dbReference type="PIRSF" id="PIRSF000303">
    <property type="entry name" value="Glutathion_perox"/>
    <property type="match status" value="1"/>
</dbReference>
<dbReference type="PRINTS" id="PR01011">
    <property type="entry name" value="GLUTPROXDASE"/>
</dbReference>
<dbReference type="SUPFAM" id="SSF52833">
    <property type="entry name" value="Thioredoxin-like"/>
    <property type="match status" value="1"/>
</dbReference>
<dbReference type="PROSITE" id="PS00460">
    <property type="entry name" value="GLUTATHIONE_PEROXID_1"/>
    <property type="match status" value="1"/>
</dbReference>
<dbReference type="PROSITE" id="PS00763">
    <property type="entry name" value="GLUTATHIONE_PEROXID_2"/>
    <property type="match status" value="1"/>
</dbReference>
<dbReference type="PROSITE" id="PS51355">
    <property type="entry name" value="GLUTATHIONE_PEROXID_3"/>
    <property type="match status" value="1"/>
</dbReference>
<accession>Q91WR8</accession>
<accession>F2Z3U8</accession>
<evidence type="ECO:0000250" key="1"/>
<evidence type="ECO:0000255" key="2"/>
<evidence type="ECO:0000305" key="3"/>
<evidence type="ECO:0007829" key="4">
    <source>
        <dbReference type="PDB" id="7FC2"/>
    </source>
</evidence>
<comment type="catalytic activity">
    <reaction>
        <text>2 glutathione + H2O2 = glutathione disulfide + 2 H2O</text>
        <dbReference type="Rhea" id="RHEA:16833"/>
        <dbReference type="ChEBI" id="CHEBI:15377"/>
        <dbReference type="ChEBI" id="CHEBI:16240"/>
        <dbReference type="ChEBI" id="CHEBI:57925"/>
        <dbReference type="ChEBI" id="CHEBI:58297"/>
        <dbReference type="EC" id="1.11.1.9"/>
    </reaction>
</comment>
<comment type="subcellular location">
    <subcellularLocation>
        <location evidence="1">Secreted</location>
    </subcellularLocation>
</comment>
<comment type="similarity">
    <text evidence="3">Belongs to the glutathione peroxidase family.</text>
</comment>
<protein>
    <recommendedName>
        <fullName>Glutathione peroxidase 6</fullName>
        <shortName>GPx-6</shortName>
        <shortName>GSHPx-6</shortName>
        <ecNumber>1.11.1.9</ecNumber>
    </recommendedName>
</protein>
<organism>
    <name type="scientific">Mus musculus</name>
    <name type="common">Mouse</name>
    <dbReference type="NCBI Taxonomy" id="10090"/>
    <lineage>
        <taxon>Eukaryota</taxon>
        <taxon>Metazoa</taxon>
        <taxon>Chordata</taxon>
        <taxon>Craniata</taxon>
        <taxon>Vertebrata</taxon>
        <taxon>Euteleostomi</taxon>
        <taxon>Mammalia</taxon>
        <taxon>Eutheria</taxon>
        <taxon>Euarchontoglires</taxon>
        <taxon>Glires</taxon>
        <taxon>Rodentia</taxon>
        <taxon>Myomorpha</taxon>
        <taxon>Muroidea</taxon>
        <taxon>Muridae</taxon>
        <taxon>Murinae</taxon>
        <taxon>Mus</taxon>
        <taxon>Mus</taxon>
    </lineage>
</organism>